<feature type="chain" id="PRO_0000226269" description="Acyl carrier protein phosphodiesterase">
    <location>
        <begin position="1"/>
        <end position="198"/>
    </location>
</feature>
<organism>
    <name type="scientific">Photorhabdus laumondii subsp. laumondii (strain DSM 15139 / CIP 105565 / TT01)</name>
    <name type="common">Photorhabdus luminescens subsp. laumondii</name>
    <dbReference type="NCBI Taxonomy" id="243265"/>
    <lineage>
        <taxon>Bacteria</taxon>
        <taxon>Pseudomonadati</taxon>
        <taxon>Pseudomonadota</taxon>
        <taxon>Gammaproteobacteria</taxon>
        <taxon>Enterobacterales</taxon>
        <taxon>Morganellaceae</taxon>
        <taxon>Photorhabdus</taxon>
    </lineage>
</organism>
<evidence type="ECO:0000255" key="1">
    <source>
        <dbReference type="HAMAP-Rule" id="MF_01950"/>
    </source>
</evidence>
<proteinExistence type="inferred from homology"/>
<accession>Q7N0I2</accession>
<keyword id="KW-0275">Fatty acid biosynthesis</keyword>
<keyword id="KW-0276">Fatty acid metabolism</keyword>
<keyword id="KW-0378">Hydrolase</keyword>
<keyword id="KW-0444">Lipid biosynthesis</keyword>
<keyword id="KW-0443">Lipid metabolism</keyword>
<keyword id="KW-1185">Reference proteome</keyword>
<dbReference type="EC" id="3.1.4.14" evidence="1"/>
<dbReference type="EMBL" id="BX571872">
    <property type="protein sequence ID" value="CAE16278.1"/>
    <property type="molecule type" value="Genomic_DNA"/>
</dbReference>
<dbReference type="RefSeq" id="WP_011148041.1">
    <property type="nucleotide sequence ID" value="NC_005126.1"/>
</dbReference>
<dbReference type="STRING" id="243265.plu3906"/>
<dbReference type="GeneID" id="48850135"/>
<dbReference type="KEGG" id="plu:plu3906"/>
<dbReference type="eggNOG" id="COG3124">
    <property type="taxonomic scope" value="Bacteria"/>
</dbReference>
<dbReference type="HOGENOM" id="CLU_099370_1_1_6"/>
<dbReference type="OrthoDB" id="8442777at2"/>
<dbReference type="Proteomes" id="UP000002514">
    <property type="component" value="Chromosome"/>
</dbReference>
<dbReference type="GO" id="GO:0008770">
    <property type="term" value="F:[acyl-carrier-protein] phosphodiesterase activity"/>
    <property type="evidence" value="ECO:0007669"/>
    <property type="project" value="UniProtKB-UniRule"/>
</dbReference>
<dbReference type="GO" id="GO:0006633">
    <property type="term" value="P:fatty acid biosynthetic process"/>
    <property type="evidence" value="ECO:0007669"/>
    <property type="project" value="UniProtKB-UniRule"/>
</dbReference>
<dbReference type="HAMAP" id="MF_01950">
    <property type="entry name" value="AcpH"/>
    <property type="match status" value="1"/>
</dbReference>
<dbReference type="InterPro" id="IPR007431">
    <property type="entry name" value="ACP_PD"/>
</dbReference>
<dbReference type="InterPro" id="IPR023491">
    <property type="entry name" value="ACP_phosphodiesterase_gpbac"/>
</dbReference>
<dbReference type="PANTHER" id="PTHR38764">
    <property type="entry name" value="ACYL CARRIER PROTEIN PHOSPHODIESTERASE"/>
    <property type="match status" value="1"/>
</dbReference>
<dbReference type="PANTHER" id="PTHR38764:SF1">
    <property type="entry name" value="ACYL CARRIER PROTEIN PHOSPHODIESTERASE"/>
    <property type="match status" value="1"/>
</dbReference>
<dbReference type="Pfam" id="PF04336">
    <property type="entry name" value="ACP_PD"/>
    <property type="match status" value="1"/>
</dbReference>
<dbReference type="PIRSF" id="PIRSF011489">
    <property type="entry name" value="DUF479"/>
    <property type="match status" value="1"/>
</dbReference>
<sequence length="198" mass="23227">MNFLAHLHLATLADSSLLGNLMADFVRGNPEGQYSADVVAGIRMHRRVDVLTDTHPLVIQARHLFSNSYRRVAPITLDIIWDHFLSLNWDKLVPTYSLPAFIHHARSQIEPHLYYTPEKFQELNAFLWRQNWLIRYADLAFIADVLKGMARRHPRLSALSGSFQDIEQHYADFDALFWQFYPYMMEKAENKDFYCLPQ</sequence>
<reference key="1">
    <citation type="journal article" date="2003" name="Nat. Biotechnol.">
        <title>The genome sequence of the entomopathogenic bacterium Photorhabdus luminescens.</title>
        <authorList>
            <person name="Duchaud E."/>
            <person name="Rusniok C."/>
            <person name="Frangeul L."/>
            <person name="Buchrieser C."/>
            <person name="Givaudan A."/>
            <person name="Taourit S."/>
            <person name="Bocs S."/>
            <person name="Boursaux-Eude C."/>
            <person name="Chandler M."/>
            <person name="Charles J.-F."/>
            <person name="Dassa E."/>
            <person name="Derose R."/>
            <person name="Derzelle S."/>
            <person name="Freyssinet G."/>
            <person name="Gaudriault S."/>
            <person name="Medigue C."/>
            <person name="Lanois A."/>
            <person name="Powell K."/>
            <person name="Siguier P."/>
            <person name="Vincent R."/>
            <person name="Wingate V."/>
            <person name="Zouine M."/>
            <person name="Glaser P."/>
            <person name="Boemare N."/>
            <person name="Danchin A."/>
            <person name="Kunst F."/>
        </authorList>
    </citation>
    <scope>NUCLEOTIDE SEQUENCE [LARGE SCALE GENOMIC DNA]</scope>
    <source>
        <strain>DSM 15139 / CIP 105565 / TT01</strain>
    </source>
</reference>
<gene>
    <name evidence="1" type="primary">acpH</name>
    <name type="ordered locus">plu3906</name>
</gene>
<name>ACPH_PHOLL</name>
<comment type="function">
    <text evidence="1">Converts holo-ACP to apo-ACP by hydrolytic cleavage of the phosphopantetheine prosthetic group from ACP.</text>
</comment>
<comment type="catalytic activity">
    <reaction evidence="1">
        <text>holo-[ACP] + H2O = apo-[ACP] + (R)-4'-phosphopantetheine + H(+)</text>
        <dbReference type="Rhea" id="RHEA:20537"/>
        <dbReference type="Rhea" id="RHEA-COMP:9685"/>
        <dbReference type="Rhea" id="RHEA-COMP:9690"/>
        <dbReference type="ChEBI" id="CHEBI:15377"/>
        <dbReference type="ChEBI" id="CHEBI:15378"/>
        <dbReference type="ChEBI" id="CHEBI:29999"/>
        <dbReference type="ChEBI" id="CHEBI:61723"/>
        <dbReference type="ChEBI" id="CHEBI:64479"/>
        <dbReference type="EC" id="3.1.4.14"/>
    </reaction>
</comment>
<comment type="similarity">
    <text evidence="1">Belongs to the AcpH family.</text>
</comment>
<protein>
    <recommendedName>
        <fullName evidence="1">Acyl carrier protein phosphodiesterase</fullName>
        <shortName evidence="1">ACP phosphodiesterase</shortName>
        <ecNumber evidence="1">3.1.4.14</ecNumber>
    </recommendedName>
</protein>